<protein>
    <recommendedName>
        <fullName evidence="1">Katanin p60 ATPase-containing subunit A1</fullName>
        <shortName evidence="1">Katanin p60 subunit A1</shortName>
        <ecNumber evidence="1">5.6.1.1</ecNumber>
    </recommendedName>
    <alternativeName>
        <fullName>CAD ATPase</fullName>
    </alternativeName>
    <alternativeName>
        <fullName evidence="11">Katanin-1</fullName>
        <shortName evidence="11">AtKTN1</shortName>
    </alternativeName>
    <alternativeName>
        <fullName evidence="14">Katanin-like microtubule-severing protein</fullName>
        <shortName evidence="14">AtKSS</shortName>
    </alternativeName>
    <alternativeName>
        <fullName evidence="10">Protein BOTERO 1</fullName>
    </alternativeName>
    <alternativeName>
        <fullName evidence="12">Protein ECTOPIC ROOT HAIR 3</fullName>
    </alternativeName>
    <alternativeName>
        <fullName evidence="16">Protein FAT ROOT</fullName>
    </alternativeName>
    <alternativeName>
        <fullName evidence="11">Protein FRAGILE FIBER 2</fullName>
        <shortName evidence="15">AtAAA1</shortName>
    </alternativeName>
    <alternativeName>
        <fullName evidence="1 13">p60 katanin</fullName>
        <shortName evidence="13">Atp60</shortName>
    </alternativeName>
</protein>
<name>KTNA1_ARATH</name>
<proteinExistence type="evidence at protein level"/>
<feature type="chain" id="PRO_0000084600" description="Katanin p60 ATPase-containing subunit A1">
    <location>
        <begin position="1"/>
        <end position="523"/>
    </location>
</feature>
<feature type="region of interest" description="Disordered" evidence="2">
    <location>
        <begin position="82"/>
        <end position="215"/>
    </location>
</feature>
<feature type="compositionally biased region" description="Low complexity" evidence="2">
    <location>
        <begin position="178"/>
        <end position="194"/>
    </location>
</feature>
<feature type="binding site" evidence="1">
    <location>
        <begin position="279"/>
        <end position="286"/>
    </location>
    <ligand>
        <name>ATP</name>
        <dbReference type="ChEBI" id="CHEBI:30616"/>
    </ligand>
</feature>
<feature type="sequence conflict" description="In Ref. 3; BAB87822." evidence="17" ref="3">
    <original>S</original>
    <variation>N</variation>
    <location>
        <position position="5"/>
    </location>
</feature>
<feature type="sequence conflict" description="In Ref. 3; BAB87822." evidence="17" ref="3">
    <original>T</original>
    <variation>S</variation>
    <location>
        <position position="132"/>
    </location>
</feature>
<dbReference type="EC" id="5.6.1.1" evidence="1"/>
<dbReference type="EMBL" id="AF358779">
    <property type="protein sequence ID" value="AAK51051.1"/>
    <property type="molecule type" value="mRNA"/>
</dbReference>
<dbReference type="EMBL" id="AF359248">
    <property type="protein sequence ID" value="AAK54074.1"/>
    <property type="molecule type" value="Genomic_DNA"/>
</dbReference>
<dbReference type="EMBL" id="AF048706">
    <property type="protein sequence ID" value="AAF21247.1"/>
    <property type="molecule type" value="mRNA"/>
</dbReference>
<dbReference type="EMBL" id="AB044785">
    <property type="protein sequence ID" value="BAB87822.1"/>
    <property type="molecule type" value="mRNA"/>
</dbReference>
<dbReference type="EMBL" id="AC018848">
    <property type="protein sequence ID" value="AAG52435.1"/>
    <property type="molecule type" value="Genomic_DNA"/>
</dbReference>
<dbReference type="EMBL" id="CP002684">
    <property type="protein sequence ID" value="AEE36390.1"/>
    <property type="molecule type" value="Genomic_DNA"/>
</dbReference>
<dbReference type="EMBL" id="AY059919">
    <property type="protein sequence ID" value="AAL24401.1"/>
    <property type="molecule type" value="mRNA"/>
</dbReference>
<dbReference type="EMBL" id="BT000149">
    <property type="protein sequence ID" value="AAN15468.1"/>
    <property type="molecule type" value="mRNA"/>
</dbReference>
<dbReference type="PIR" id="B96835">
    <property type="entry name" value="B96835"/>
</dbReference>
<dbReference type="RefSeq" id="NP_178151.1">
    <property type="nucleotide sequence ID" value="NM_106684.5"/>
</dbReference>
<dbReference type="SMR" id="Q9SEX2"/>
<dbReference type="BioGRID" id="29593">
    <property type="interactions" value="3"/>
</dbReference>
<dbReference type="FunCoup" id="Q9SEX2">
    <property type="interactions" value="3340"/>
</dbReference>
<dbReference type="IntAct" id="Q9SEX2">
    <property type="interactions" value="2"/>
</dbReference>
<dbReference type="STRING" id="3702.Q9SEX2"/>
<dbReference type="iPTMnet" id="Q9SEX2"/>
<dbReference type="PaxDb" id="3702-AT1G80350.1"/>
<dbReference type="ProteomicsDB" id="237036"/>
<dbReference type="EnsemblPlants" id="AT1G80350.1">
    <property type="protein sequence ID" value="AT1G80350.1"/>
    <property type="gene ID" value="AT1G80350"/>
</dbReference>
<dbReference type="GeneID" id="844375"/>
<dbReference type="Gramene" id="AT1G80350.1">
    <property type="protein sequence ID" value="AT1G80350.1"/>
    <property type="gene ID" value="AT1G80350"/>
</dbReference>
<dbReference type="KEGG" id="ath:AT1G80350"/>
<dbReference type="Araport" id="AT1G80350"/>
<dbReference type="TAIR" id="AT1G80350">
    <property type="gene designation" value="ERH3"/>
</dbReference>
<dbReference type="eggNOG" id="KOG0738">
    <property type="taxonomic scope" value="Eukaryota"/>
</dbReference>
<dbReference type="HOGENOM" id="CLU_000688_21_1_1"/>
<dbReference type="InParanoid" id="Q9SEX2"/>
<dbReference type="OMA" id="TAKMMPV"/>
<dbReference type="OrthoDB" id="191529at2759"/>
<dbReference type="PhylomeDB" id="Q9SEX2"/>
<dbReference type="BRENDA" id="5.6.1.1">
    <property type="organism ID" value="399"/>
</dbReference>
<dbReference type="CD-CODE" id="33FCD62D">
    <property type="entry name" value="Centrosome"/>
</dbReference>
<dbReference type="PRO" id="PR:Q9SEX2"/>
<dbReference type="Proteomes" id="UP000006548">
    <property type="component" value="Chromosome 1"/>
</dbReference>
<dbReference type="ExpressionAtlas" id="Q9SEX2">
    <property type="expression patterns" value="baseline and differential"/>
</dbReference>
<dbReference type="GO" id="GO:0005737">
    <property type="term" value="C:cytoplasm"/>
    <property type="evidence" value="ECO:0007669"/>
    <property type="project" value="UniProtKB-UniRule"/>
</dbReference>
<dbReference type="GO" id="GO:0005874">
    <property type="term" value="C:microtubule"/>
    <property type="evidence" value="ECO:0007669"/>
    <property type="project" value="UniProtKB-KW"/>
</dbReference>
<dbReference type="GO" id="GO:0015630">
    <property type="term" value="C:microtubule cytoskeleton"/>
    <property type="evidence" value="ECO:0000314"/>
    <property type="project" value="UniProtKB"/>
</dbReference>
<dbReference type="GO" id="GO:0005524">
    <property type="term" value="F:ATP binding"/>
    <property type="evidence" value="ECO:0007669"/>
    <property type="project" value="UniProtKB-KW"/>
</dbReference>
<dbReference type="GO" id="GO:0016887">
    <property type="term" value="F:ATP hydrolysis activity"/>
    <property type="evidence" value="ECO:0007669"/>
    <property type="project" value="InterPro"/>
</dbReference>
<dbReference type="GO" id="GO:0008017">
    <property type="term" value="F:microtubule binding"/>
    <property type="evidence" value="ECO:0007669"/>
    <property type="project" value="UniProtKB-UniRule"/>
</dbReference>
<dbReference type="GO" id="GO:0008568">
    <property type="term" value="F:microtubule severing ATPase activity"/>
    <property type="evidence" value="ECO:0007669"/>
    <property type="project" value="UniProtKB-EC"/>
</dbReference>
<dbReference type="GO" id="GO:0051211">
    <property type="term" value="P:anisotropic cell growth"/>
    <property type="evidence" value="ECO:0000315"/>
    <property type="project" value="UniProtKB"/>
</dbReference>
<dbReference type="GO" id="GO:0043622">
    <property type="term" value="P:cortical microtubule organization"/>
    <property type="evidence" value="ECO:0000315"/>
    <property type="project" value="UniProtKB"/>
</dbReference>
<dbReference type="GO" id="GO:0090436">
    <property type="term" value="P:leaf pavement cell development"/>
    <property type="evidence" value="ECO:0000315"/>
    <property type="project" value="UniProtKB"/>
</dbReference>
<dbReference type="GO" id="GO:0000226">
    <property type="term" value="P:microtubule cytoskeleton organization"/>
    <property type="evidence" value="ECO:0000315"/>
    <property type="project" value="TAIR"/>
</dbReference>
<dbReference type="GO" id="GO:0051013">
    <property type="term" value="P:microtubule severing"/>
    <property type="evidence" value="ECO:0000315"/>
    <property type="project" value="UniProtKB"/>
</dbReference>
<dbReference type="GO" id="GO:0009825">
    <property type="term" value="P:multidimensional cell growth"/>
    <property type="evidence" value="ECO:0000315"/>
    <property type="project" value="TAIR"/>
</dbReference>
<dbReference type="GO" id="GO:0009832">
    <property type="term" value="P:plant-type cell wall biogenesis"/>
    <property type="evidence" value="ECO:0000315"/>
    <property type="project" value="TAIR"/>
</dbReference>
<dbReference type="GO" id="GO:0010091">
    <property type="term" value="P:trichome branching"/>
    <property type="evidence" value="ECO:0000315"/>
    <property type="project" value="TAIR"/>
</dbReference>
<dbReference type="CDD" id="cd21748">
    <property type="entry name" value="Kp60-NTD"/>
    <property type="match status" value="1"/>
</dbReference>
<dbReference type="FunFam" id="1.10.8.60:FF:000055">
    <property type="entry name" value="Katanin p60 ATPase-containing subunit A1"/>
    <property type="match status" value="1"/>
</dbReference>
<dbReference type="FunFam" id="1.20.58.80:FF:000003">
    <property type="entry name" value="Katanin p60 ATPase-containing subunit A1"/>
    <property type="match status" value="1"/>
</dbReference>
<dbReference type="FunFam" id="3.40.50.300:FF:003172">
    <property type="entry name" value="Katanin p60 ATPase-containing subunit A1"/>
    <property type="match status" value="1"/>
</dbReference>
<dbReference type="Gene3D" id="1.10.8.60">
    <property type="match status" value="1"/>
</dbReference>
<dbReference type="Gene3D" id="3.40.50.300">
    <property type="entry name" value="P-loop containing nucleotide triphosphate hydrolases"/>
    <property type="match status" value="1"/>
</dbReference>
<dbReference type="Gene3D" id="1.20.58.80">
    <property type="entry name" value="Phosphotransferase system, lactose/cellobiose-type IIA subunit"/>
    <property type="match status" value="1"/>
</dbReference>
<dbReference type="HAMAP" id="MF_03023">
    <property type="entry name" value="Katanin_p60_A1"/>
    <property type="match status" value="1"/>
</dbReference>
<dbReference type="InterPro" id="IPR003593">
    <property type="entry name" value="AAA+_ATPase"/>
</dbReference>
<dbReference type="InterPro" id="IPR041569">
    <property type="entry name" value="AAA_lid_3"/>
</dbReference>
<dbReference type="InterPro" id="IPR003959">
    <property type="entry name" value="ATPase_AAA_core"/>
</dbReference>
<dbReference type="InterPro" id="IPR003960">
    <property type="entry name" value="ATPase_AAA_CS"/>
</dbReference>
<dbReference type="InterPro" id="IPR028596">
    <property type="entry name" value="KATNA1"/>
</dbReference>
<dbReference type="InterPro" id="IPR048611">
    <property type="entry name" value="KATNA1_MIT"/>
</dbReference>
<dbReference type="InterPro" id="IPR050304">
    <property type="entry name" value="MT-severing_AAA_ATPase"/>
</dbReference>
<dbReference type="InterPro" id="IPR027417">
    <property type="entry name" value="P-loop_NTPase"/>
</dbReference>
<dbReference type="PANTHER" id="PTHR23074">
    <property type="entry name" value="AAA DOMAIN-CONTAINING"/>
    <property type="match status" value="1"/>
</dbReference>
<dbReference type="PANTHER" id="PTHR23074:SF19">
    <property type="entry name" value="KATANIN P60 ATPASE-CONTAINING SUBUNIT A1"/>
    <property type="match status" value="1"/>
</dbReference>
<dbReference type="Pfam" id="PF00004">
    <property type="entry name" value="AAA"/>
    <property type="match status" value="1"/>
</dbReference>
<dbReference type="Pfam" id="PF17862">
    <property type="entry name" value="AAA_lid_3"/>
    <property type="match status" value="1"/>
</dbReference>
<dbReference type="Pfam" id="PF21126">
    <property type="entry name" value="KATNA1_MIT"/>
    <property type="match status" value="1"/>
</dbReference>
<dbReference type="SMART" id="SM00382">
    <property type="entry name" value="AAA"/>
    <property type="match status" value="1"/>
</dbReference>
<dbReference type="SUPFAM" id="SSF52540">
    <property type="entry name" value="P-loop containing nucleoside triphosphate hydrolases"/>
    <property type="match status" value="1"/>
</dbReference>
<dbReference type="PROSITE" id="PS00674">
    <property type="entry name" value="AAA"/>
    <property type="match status" value="1"/>
</dbReference>
<organism>
    <name type="scientific">Arabidopsis thaliana</name>
    <name type="common">Mouse-ear cress</name>
    <dbReference type="NCBI Taxonomy" id="3702"/>
    <lineage>
        <taxon>Eukaryota</taxon>
        <taxon>Viridiplantae</taxon>
        <taxon>Streptophyta</taxon>
        <taxon>Embryophyta</taxon>
        <taxon>Tracheophyta</taxon>
        <taxon>Spermatophyta</taxon>
        <taxon>Magnoliopsida</taxon>
        <taxon>eudicotyledons</taxon>
        <taxon>Gunneridae</taxon>
        <taxon>Pentapetalae</taxon>
        <taxon>rosids</taxon>
        <taxon>malvids</taxon>
        <taxon>Brassicales</taxon>
        <taxon>Brassicaceae</taxon>
        <taxon>Camelineae</taxon>
        <taxon>Arabidopsis</taxon>
    </lineage>
</organism>
<evidence type="ECO:0000255" key="1">
    <source>
        <dbReference type="HAMAP-Rule" id="MF_03023"/>
    </source>
</evidence>
<evidence type="ECO:0000256" key="2">
    <source>
        <dbReference type="SAM" id="MobiDB-lite"/>
    </source>
</evidence>
<evidence type="ECO:0000269" key="3">
    <source>
    </source>
</evidence>
<evidence type="ECO:0000269" key="4">
    <source>
    </source>
</evidence>
<evidence type="ECO:0000269" key="5">
    <source>
    </source>
</evidence>
<evidence type="ECO:0000269" key="6">
    <source>
    </source>
</evidence>
<evidence type="ECO:0000269" key="7">
    <source>
    </source>
</evidence>
<evidence type="ECO:0000269" key="8">
    <source>
    </source>
</evidence>
<evidence type="ECO:0000269" key="9">
    <source>
    </source>
</evidence>
<evidence type="ECO:0000303" key="10">
    <source>
    </source>
</evidence>
<evidence type="ECO:0000303" key="11">
    <source>
    </source>
</evidence>
<evidence type="ECO:0000303" key="12">
    <source>
    </source>
</evidence>
<evidence type="ECO:0000303" key="13">
    <source>
    </source>
</evidence>
<evidence type="ECO:0000303" key="14">
    <source>
    </source>
</evidence>
<evidence type="ECO:0000303" key="15">
    <source ref="2"/>
</evidence>
<evidence type="ECO:0000303" key="16">
    <source ref="3"/>
</evidence>
<evidence type="ECO:0000305" key="17"/>
<evidence type="ECO:0000312" key="18">
    <source>
        <dbReference type="Araport" id="AT1G80350"/>
    </source>
</evidence>
<evidence type="ECO:0000312" key="19">
    <source>
        <dbReference type="EMBL" id="AAG52435.1"/>
    </source>
</evidence>
<gene>
    <name evidence="15" type="primary">AAA1</name>
    <name evidence="10" type="synonym">BOT1</name>
    <name evidence="12" type="synonym">ERH3</name>
    <name evidence="11" type="synonym">FRA2</name>
    <name evidence="16" type="synonym">FTR</name>
    <name evidence="14" type="synonym">KSS</name>
    <name evidence="11" type="synonym">KTN1</name>
    <name evidence="14" type="synonym">LUE1</name>
    <name evidence="18" type="ordered locus">At1g80350</name>
    <name evidence="19" type="ORF">F5I6.10</name>
</gene>
<accession>Q9SEX2</accession>
<accession>Q8S9E4</accession>
<reference key="1">
    <citation type="journal article" date="2001" name="Plant Cell">
        <title>A katanin-like protein regulates normal cell wall biosynthesis and cell elongation.</title>
        <authorList>
            <person name="Burk D.H."/>
            <person name="Liu B."/>
            <person name="Zhong R."/>
            <person name="Morrison W.H."/>
            <person name="Ye Z.-H."/>
        </authorList>
    </citation>
    <scope>NUCLEOTIDE SEQUENCE [GENOMIC DNA / MRNA]</scope>
    <scope>FUNCTION</scope>
    <scope>TISSUE SPECIFICITY</scope>
</reference>
<reference key="2">
    <citation type="submission" date="1998-02" db="EMBL/GenBank/DDBJ databases">
        <title>AtAAA1 is a member of a family of ATPases associated with diverse, often ubiquitin pathway related functions.</title>
        <authorList>
            <person name="Chandler J.S."/>
            <person name="McArdler B.R."/>
            <person name="Callis C."/>
        </authorList>
    </citation>
    <scope>NUCLEOTIDE SEQUENCE [MRNA]</scope>
</reference>
<reference key="3">
    <citation type="submission" date="2000-06" db="EMBL/GenBank/DDBJ databases">
        <title>Characterization of the fat root mutant in Arabidopsis.</title>
        <authorList>
            <person name="Matsui K."/>
            <person name="Wada T."/>
            <person name="Ishiguro S."/>
            <person name="Okada K."/>
        </authorList>
    </citation>
    <scope>NUCLEOTIDE SEQUENCE [MRNA]</scope>
    <source>
        <strain>cv. Wassilewskija</strain>
    </source>
</reference>
<reference key="4">
    <citation type="journal article" date="2000" name="Nature">
        <title>Sequence and analysis of chromosome 1 of the plant Arabidopsis thaliana.</title>
        <authorList>
            <person name="Theologis A."/>
            <person name="Ecker J.R."/>
            <person name="Palm C.J."/>
            <person name="Federspiel N.A."/>
            <person name="Kaul S."/>
            <person name="White O."/>
            <person name="Alonso J."/>
            <person name="Altafi H."/>
            <person name="Araujo R."/>
            <person name="Bowman C.L."/>
            <person name="Brooks S.Y."/>
            <person name="Buehler E."/>
            <person name="Chan A."/>
            <person name="Chao Q."/>
            <person name="Chen H."/>
            <person name="Cheuk R.F."/>
            <person name="Chin C.W."/>
            <person name="Chung M.K."/>
            <person name="Conn L."/>
            <person name="Conway A.B."/>
            <person name="Conway A.R."/>
            <person name="Creasy T.H."/>
            <person name="Dewar K."/>
            <person name="Dunn P."/>
            <person name="Etgu P."/>
            <person name="Feldblyum T.V."/>
            <person name="Feng J.-D."/>
            <person name="Fong B."/>
            <person name="Fujii C.Y."/>
            <person name="Gill J.E."/>
            <person name="Goldsmith A.D."/>
            <person name="Haas B."/>
            <person name="Hansen N.F."/>
            <person name="Hughes B."/>
            <person name="Huizar L."/>
            <person name="Hunter J.L."/>
            <person name="Jenkins J."/>
            <person name="Johnson-Hopson C."/>
            <person name="Khan S."/>
            <person name="Khaykin E."/>
            <person name="Kim C.J."/>
            <person name="Koo H.L."/>
            <person name="Kremenetskaia I."/>
            <person name="Kurtz D.B."/>
            <person name="Kwan A."/>
            <person name="Lam B."/>
            <person name="Langin-Hooper S."/>
            <person name="Lee A."/>
            <person name="Lee J.M."/>
            <person name="Lenz C.A."/>
            <person name="Li J.H."/>
            <person name="Li Y.-P."/>
            <person name="Lin X."/>
            <person name="Liu S.X."/>
            <person name="Liu Z.A."/>
            <person name="Luros J.S."/>
            <person name="Maiti R."/>
            <person name="Marziali A."/>
            <person name="Militscher J."/>
            <person name="Miranda M."/>
            <person name="Nguyen M."/>
            <person name="Nierman W.C."/>
            <person name="Osborne B.I."/>
            <person name="Pai G."/>
            <person name="Peterson J."/>
            <person name="Pham P.K."/>
            <person name="Rizzo M."/>
            <person name="Rooney T."/>
            <person name="Rowley D."/>
            <person name="Sakano H."/>
            <person name="Salzberg S.L."/>
            <person name="Schwartz J.R."/>
            <person name="Shinn P."/>
            <person name="Southwick A.M."/>
            <person name="Sun H."/>
            <person name="Tallon L.J."/>
            <person name="Tambunga G."/>
            <person name="Toriumi M.J."/>
            <person name="Town C.D."/>
            <person name="Utterback T."/>
            <person name="Van Aken S."/>
            <person name="Vaysberg M."/>
            <person name="Vysotskaia V.S."/>
            <person name="Walker M."/>
            <person name="Wu D."/>
            <person name="Yu G."/>
            <person name="Fraser C.M."/>
            <person name="Venter J.C."/>
            <person name="Davis R.W."/>
        </authorList>
    </citation>
    <scope>NUCLEOTIDE SEQUENCE [LARGE SCALE GENOMIC DNA]</scope>
    <source>
        <strain>cv. Columbia</strain>
    </source>
</reference>
<reference key="5">
    <citation type="journal article" date="2017" name="Plant J.">
        <title>Araport11: a complete reannotation of the Arabidopsis thaliana reference genome.</title>
        <authorList>
            <person name="Cheng C.Y."/>
            <person name="Krishnakumar V."/>
            <person name="Chan A.P."/>
            <person name="Thibaud-Nissen F."/>
            <person name="Schobel S."/>
            <person name="Town C.D."/>
        </authorList>
    </citation>
    <scope>GENOME REANNOTATION</scope>
    <source>
        <strain>cv. Columbia</strain>
    </source>
</reference>
<reference key="6">
    <citation type="journal article" date="2003" name="Science">
        <title>Empirical analysis of transcriptional activity in the Arabidopsis genome.</title>
        <authorList>
            <person name="Yamada K."/>
            <person name="Lim J."/>
            <person name="Dale J.M."/>
            <person name="Chen H."/>
            <person name="Shinn P."/>
            <person name="Palm C.J."/>
            <person name="Southwick A.M."/>
            <person name="Wu H.C."/>
            <person name="Kim C.J."/>
            <person name="Nguyen M."/>
            <person name="Pham P.K."/>
            <person name="Cheuk R.F."/>
            <person name="Karlin-Newmann G."/>
            <person name="Liu S.X."/>
            <person name="Lam B."/>
            <person name="Sakano H."/>
            <person name="Wu T."/>
            <person name="Yu G."/>
            <person name="Miranda M."/>
            <person name="Quach H.L."/>
            <person name="Tripp M."/>
            <person name="Chang C.H."/>
            <person name="Lee J.M."/>
            <person name="Toriumi M.J."/>
            <person name="Chan M.M."/>
            <person name="Tang C.C."/>
            <person name="Onodera C.S."/>
            <person name="Deng J.M."/>
            <person name="Akiyama K."/>
            <person name="Ansari Y."/>
            <person name="Arakawa T."/>
            <person name="Banh J."/>
            <person name="Banno F."/>
            <person name="Bowser L."/>
            <person name="Brooks S.Y."/>
            <person name="Carninci P."/>
            <person name="Chao Q."/>
            <person name="Choy N."/>
            <person name="Enju A."/>
            <person name="Goldsmith A.D."/>
            <person name="Gurjal M."/>
            <person name="Hansen N.F."/>
            <person name="Hayashizaki Y."/>
            <person name="Johnson-Hopson C."/>
            <person name="Hsuan V.W."/>
            <person name="Iida K."/>
            <person name="Karnes M."/>
            <person name="Khan S."/>
            <person name="Koesema E."/>
            <person name="Ishida J."/>
            <person name="Jiang P.X."/>
            <person name="Jones T."/>
            <person name="Kawai J."/>
            <person name="Kamiya A."/>
            <person name="Meyers C."/>
            <person name="Nakajima M."/>
            <person name="Narusaka M."/>
            <person name="Seki M."/>
            <person name="Sakurai T."/>
            <person name="Satou M."/>
            <person name="Tamse R."/>
            <person name="Vaysberg M."/>
            <person name="Wallender E.K."/>
            <person name="Wong C."/>
            <person name="Yamamura Y."/>
            <person name="Yuan S."/>
            <person name="Shinozaki K."/>
            <person name="Davis R.W."/>
            <person name="Theologis A."/>
            <person name="Ecker J.R."/>
        </authorList>
    </citation>
    <scope>NUCLEOTIDE SEQUENCE [LARGE SCALE MRNA]</scope>
    <source>
        <strain>cv. Columbia</strain>
    </source>
</reference>
<reference key="7">
    <citation type="journal article" date="2001" name="Plant J.">
        <title>BOTERO1 is required for normal orientation of cortical microtubules and anisotropic cell expansion in Arabidopsis.</title>
        <authorList>
            <person name="Bichet A."/>
            <person name="Desnos T."/>
            <person name="Turner S."/>
            <person name="Grandjean O."/>
            <person name="Hofte H."/>
        </authorList>
    </citation>
    <scope>FUNCTION</scope>
</reference>
<reference key="8">
    <citation type="journal article" date="2002" name="Biochem. J.">
        <title>Functional evidence for in vitro microtubule severing by the plant katanin homologue.</title>
        <authorList>
            <person name="Stoppin-Mellet V."/>
            <person name="Gaillard J."/>
            <person name="Vantard M."/>
        </authorList>
    </citation>
    <scope>FUNCTION</scope>
</reference>
<reference key="9">
    <citation type="journal article" date="2002" name="Development">
        <title>Cell specification in the Arabidopsis root epidermis requires the activity of ECTOPIC ROOT HAIR 3-a katanin-p60 protein.</title>
        <authorList>
            <person name="Webb M."/>
            <person name="Jouannic S."/>
            <person name="Foreman J."/>
            <person name="Linstead P."/>
            <person name="Dolan L."/>
        </authorList>
    </citation>
    <scope>FUNCTION</scope>
</reference>
<reference key="10">
    <citation type="journal article" date="2003" name="J. Cell Sci.">
        <title>The Arabidopsis lue1 mutant defines a katanin p60 ortholog involved in hormonal control of microtubule orientation during cell growth.</title>
        <authorList>
            <person name="Bouquin T."/>
            <person name="Mattsson O."/>
            <person name="Naested H."/>
            <person name="Foster R."/>
            <person name="Mundy J."/>
        </authorList>
    </citation>
    <scope>FUNCTION</scope>
    <scope>SUBCELLULAR LOCATION</scope>
    <scope>INTERACTION WITH KTN80.1 AND KIN14A</scope>
</reference>
<reference key="11">
    <citation type="journal article" date="2017" name="EMBO J.">
        <title>KTN80 confers precision to microtubule severing by specific targeting of katanin complexes in plant cells.</title>
        <authorList>
            <person name="Wang C."/>
            <person name="Liu W."/>
            <person name="Wang G."/>
            <person name="Li J."/>
            <person name="Dong L."/>
            <person name="Han L."/>
            <person name="Wang Q."/>
            <person name="Tian J."/>
            <person name="Yu Y."/>
            <person name="Gao C."/>
            <person name="Kong Z."/>
        </authorList>
    </citation>
    <scope>FUNCTION</scope>
    <scope>DISRUPTION PHENOTYPE</scope>
    <scope>SUBCELLULAR LOCATION</scope>
    <scope>TISSUE SPECIFICITY</scope>
    <scope>SUBUNIT</scope>
    <scope>INTERACTION WITH KTN80.1; KTN80.2; KTN80.3 AND KTN80.4</scope>
    <scope>GENE FAMILY</scope>
    <scope>NOMENCLATURE</scope>
    <source>
        <strain>cv. Columbia</strain>
    </source>
</reference>
<reference key="12">
    <citation type="journal article" date="2022" name="New Phytol.">
        <title>The IPGA1-ANGUSTIFOLIA module regulates microtubule organisation and pavement cell shape in Arabidopsis.</title>
        <authorList>
            <person name="Chen B."/>
            <person name="Dang X."/>
            <person name="Bai W."/>
            <person name="Liu M."/>
            <person name="Li Y."/>
            <person name="Zhu L."/>
            <person name="Yang Y."/>
            <person name="Yu P."/>
            <person name="Ren H."/>
            <person name="Huang D."/>
            <person name="Pan X."/>
            <person name="Wang H."/>
            <person name="Qin Y."/>
            <person name="Feng S."/>
            <person name="Wang Q."/>
            <person name="Lin D."/>
        </authorList>
    </citation>
    <scope>FUNCTION</scope>
    <scope>DISRUPTION PHENOTYPE</scope>
    <scope>INTERACTION WITH IPGA1</scope>
    <source>
        <strain>cv. Columbia</strain>
    </source>
</reference>
<comment type="function">
    <text evidence="3 4 5 6 7 8 9">Severs microtubules in vitro in an ATP-dependent manner. Required for oligomerization of functional KTN80-KTN1 complexes that catalyze microtubule severing (PubMed:28978669). This activity may promote rapid reorganization of cellular microtubule arrays. May be required for reorientation of cortical microtubule arrays during cellular elongation. Failure to correctly orient these arrays drastically compromises fiber length, cell wall thickness and mechanical strength. May also be required for the spatial organization of developmental cues within the root. Involved in the IPGA1- and AN-dependent regulation of pavement cells morphogenesis leading to puzzle shape (PubMed:35975703).</text>
</comment>
<comment type="catalytic activity">
    <reaction evidence="1">
        <text>n ATP + n H2O + a microtubule = n ADP + n phosphate + (n+1) alpha/beta tubulin heterodimers.</text>
        <dbReference type="EC" id="5.6.1.1"/>
    </reaction>
</comment>
<comment type="subunit">
    <text evidence="7 8 9">May homooligomerize (PubMed:12571277). Component of KTN80-KTN1 complexes composed of a hexamer of KTN1-KTN80 heterodimers that sense microtubule (MT) geometry to confer precise MT severing (PubMed:28978669). Interacts directly with KTN80.1, KTN80.2, KTN80.3 and KTN80.4 (PubMed:28978669). Can interact with KTN80.1 (PubMed:12571277). May interact with the kinesin related protein KIN14A (PubMed:12571277). Interacts with microtubule polymers (PubMed:12571277). Binds to IPGA1 (PubMed:35975703).</text>
</comment>
<comment type="interaction">
    <interactant intactId="EBI-2025583">
        <id>Q9SEX2</id>
    </interactant>
    <interactant intactId="EBI-2025621">
        <id>Q9LX99</id>
        <label>KIN14A</label>
    </interactant>
    <organismsDiffer>false</organismsDiffer>
    <experiments>3</experiments>
</comment>
<comment type="interaction">
    <interactant intactId="EBI-2025583">
        <id>Q9SEX2</id>
    </interactant>
    <interactant intactId="EBI-2025609">
        <id>F4HTH8</id>
        <label>KTN80.2</label>
    </interactant>
    <organismsDiffer>false</organismsDiffer>
    <experiments>3</experiments>
</comment>
<comment type="subcellular location">
    <subcellularLocation>
        <location evidence="1 7 8">Cytoplasm</location>
        <location evidence="1 7 8">Cytoskeleton</location>
    </subcellularLocation>
    <text evidence="8">Present in dynamic discrete particles specifically localized to microtubule (MT) crossovers and branching nucleation sites, in a KTN80s-dependent manner.</text>
</comment>
<comment type="tissue specificity">
    <text evidence="4 8">Expressed ubiquitously, including siliques, flowers, leaves, stems and roots.</text>
</comment>
<comment type="disruption phenotype">
    <text evidence="8 9">Severe dwarf phenotype, with small and round dark-green rosette leaves as well as wide and short petioles (PubMed:28978669, PubMed:35975703). The ipga1-2 ktn1-4 and an-t1 ktn1-4 double mutants have an enhanced phenotype of pavement cells, resembling soap bubbles and no lobe formation (PubMed:35975703).</text>
</comment>
<comment type="similarity">
    <text evidence="1">Belongs to the AAA ATPase family. Katanin p60 subunit A1 subfamily.</text>
</comment>
<keyword id="KW-0067">ATP-binding</keyword>
<keyword id="KW-0963">Cytoplasm</keyword>
<keyword id="KW-0206">Cytoskeleton</keyword>
<keyword id="KW-0413">Isomerase</keyword>
<keyword id="KW-0493">Microtubule</keyword>
<keyword id="KW-0547">Nucleotide-binding</keyword>
<keyword id="KW-1185">Reference proteome</keyword>
<sequence length="523" mass="57236">MVGSSNSLAGLQDHLKLAREYALEGSYDTSVIFFDGAIAQINKHLNTLDDPLARTKWMNVKKAIMEETEVVKQLDAERRAFKEAPTGRRAASPPINTKSSFVFQPLDEYPTSSGGGPMDDPDVWRPPTRDVTSRRPARAGQTGTRKSPQDGAWARGPTTRTGPASRGGRGGATSKSTAGARSSTAGKKGAASKSNKAESMNGDAEDGKSKRGLYEGPDEDLAAMLERDVLDSTPGVRWDDVAGLSEAKRLLEEAVVLPLWMPEYFQGIRRPWKGVLMFGPPGTGKTLLAKAVATECGTTFFNVSSATLASKWRGESERMVRCLFDLARAYAPSTIFIDEIDSLCNSRGGSGEHESSRRVKSELLVQVDGVSNTATNEDGSRKIVMVLAATNFPWDIDEALRRRLEKRIYIPLPDFESRKALININLRTVEVASDVNIEDVARRTEGYSGDDLTNVCRDASMNGMRRKIAGKTRDEIKNMSKDDISNDPVAMCDFEEAIRKVQPSVSSSDIEKHEKWLSEFGSA</sequence>